<name>UBP26_ARATH</name>
<keyword id="KW-0378">Hydrolase</keyword>
<keyword id="KW-0539">Nucleus</keyword>
<keyword id="KW-0645">Protease</keyword>
<keyword id="KW-1185">Reference proteome</keyword>
<keyword id="KW-0677">Repeat</keyword>
<keyword id="KW-0788">Thiol protease</keyword>
<keyword id="KW-0833">Ubl conjugation pathway</keyword>
<proteinExistence type="evidence at protein level"/>
<dbReference type="EC" id="3.4.19.12"/>
<dbReference type="EMBL" id="AF302674">
    <property type="protein sequence ID" value="AAG42764.1"/>
    <property type="molecule type" value="mRNA"/>
</dbReference>
<dbReference type="EMBL" id="AL132964">
    <property type="protein sequence ID" value="CAB62464.1"/>
    <property type="status" value="ALT_SEQ"/>
    <property type="molecule type" value="Genomic_DNA"/>
</dbReference>
<dbReference type="EMBL" id="CP002686">
    <property type="protein sequence ID" value="AEE78564.1"/>
    <property type="molecule type" value="Genomic_DNA"/>
</dbReference>
<dbReference type="EMBL" id="CP002686">
    <property type="protein sequence ID" value="ANM63555.1"/>
    <property type="molecule type" value="Genomic_DNA"/>
</dbReference>
<dbReference type="PIR" id="T46237">
    <property type="entry name" value="T46237"/>
</dbReference>
<dbReference type="RefSeq" id="NP_001325635.1">
    <property type="nucleotide sequence ID" value="NM_001339429.1"/>
</dbReference>
<dbReference type="RefSeq" id="NP_566922.1">
    <property type="nucleotide sequence ID" value="NM_114820.4"/>
</dbReference>
<dbReference type="SMR" id="Q9SCJ9"/>
<dbReference type="FunCoup" id="Q9SCJ9">
    <property type="interactions" value="3511"/>
</dbReference>
<dbReference type="STRING" id="3702.Q9SCJ9"/>
<dbReference type="MEROPS" id="C19.068"/>
<dbReference type="iPTMnet" id="Q9SCJ9"/>
<dbReference type="PaxDb" id="3702-AT3G49600.1"/>
<dbReference type="ProteomicsDB" id="228473"/>
<dbReference type="EnsemblPlants" id="AT3G49600.1">
    <property type="protein sequence ID" value="AT3G49600.1"/>
    <property type="gene ID" value="AT3G49600"/>
</dbReference>
<dbReference type="EnsemblPlants" id="AT3G49600.2">
    <property type="protein sequence ID" value="AT3G49600.2"/>
    <property type="gene ID" value="AT3G49600"/>
</dbReference>
<dbReference type="GeneID" id="824122"/>
<dbReference type="Gramene" id="AT3G49600.1">
    <property type="protein sequence ID" value="AT3G49600.1"/>
    <property type="gene ID" value="AT3G49600"/>
</dbReference>
<dbReference type="Gramene" id="AT3G49600.2">
    <property type="protein sequence ID" value="AT3G49600.2"/>
    <property type="gene ID" value="AT3G49600"/>
</dbReference>
<dbReference type="KEGG" id="ath:AT3G49600"/>
<dbReference type="Araport" id="AT3G49600"/>
<dbReference type="TAIR" id="AT3G49600">
    <property type="gene designation" value="UBP26"/>
</dbReference>
<dbReference type="eggNOG" id="KOG1863">
    <property type="taxonomic scope" value="Eukaryota"/>
</dbReference>
<dbReference type="eggNOG" id="KOG1869">
    <property type="taxonomic scope" value="Eukaryota"/>
</dbReference>
<dbReference type="HOGENOM" id="CLU_010287_0_0_1"/>
<dbReference type="InParanoid" id="Q9SCJ9"/>
<dbReference type="CD-CODE" id="4299E36E">
    <property type="entry name" value="Nucleolus"/>
</dbReference>
<dbReference type="PRO" id="PR:Q9SCJ9"/>
<dbReference type="Proteomes" id="UP000006548">
    <property type="component" value="Chromosome 3"/>
</dbReference>
<dbReference type="ExpressionAtlas" id="Q9SCJ9">
    <property type="expression patterns" value="baseline and differential"/>
</dbReference>
<dbReference type="GO" id="GO:0005730">
    <property type="term" value="C:nucleolus"/>
    <property type="evidence" value="ECO:0007005"/>
    <property type="project" value="TAIR"/>
</dbReference>
<dbReference type="GO" id="GO:0004843">
    <property type="term" value="F:cysteine-type deubiquitinase activity"/>
    <property type="evidence" value="ECO:0007669"/>
    <property type="project" value="UniProtKB-EC"/>
</dbReference>
<dbReference type="GO" id="GO:0004197">
    <property type="term" value="F:cysteine-type endopeptidase activity"/>
    <property type="evidence" value="ECO:0007669"/>
    <property type="project" value="InterPro"/>
</dbReference>
<dbReference type="GO" id="GO:0016579">
    <property type="term" value="P:protein deubiquitination"/>
    <property type="evidence" value="ECO:0007669"/>
    <property type="project" value="InterPro"/>
</dbReference>
<dbReference type="GO" id="GO:0006508">
    <property type="term" value="P:proteolysis"/>
    <property type="evidence" value="ECO:0007669"/>
    <property type="project" value="UniProtKB-KW"/>
</dbReference>
<dbReference type="GO" id="GO:0048316">
    <property type="term" value="P:seed development"/>
    <property type="evidence" value="ECO:0000315"/>
    <property type="project" value="TAIR"/>
</dbReference>
<dbReference type="CDD" id="cd02668">
    <property type="entry name" value="Peptidase_C19L"/>
    <property type="match status" value="1"/>
</dbReference>
<dbReference type="CDD" id="cd01795">
    <property type="entry name" value="Ubl_USP48"/>
    <property type="match status" value="1"/>
</dbReference>
<dbReference type="FunFam" id="3.90.70.10:FF:000049">
    <property type="entry name" value="ubiquitin carboxyl-terminal hydrolase 48"/>
    <property type="match status" value="1"/>
</dbReference>
<dbReference type="Gene3D" id="3.90.70.10">
    <property type="entry name" value="Cysteine proteinases"/>
    <property type="match status" value="1"/>
</dbReference>
<dbReference type="Gene3D" id="3.30.2230.10">
    <property type="entry name" value="DUSP-like"/>
    <property type="match status" value="1"/>
</dbReference>
<dbReference type="Gene3D" id="3.10.20.90">
    <property type="entry name" value="Phosphatidylinositol 3-kinase Catalytic Subunit, Chain A, domain 1"/>
    <property type="match status" value="1"/>
</dbReference>
<dbReference type="InterPro" id="IPR035927">
    <property type="entry name" value="DUSP-like_sf"/>
</dbReference>
<dbReference type="InterPro" id="IPR038765">
    <property type="entry name" value="Papain-like_cys_pep_sf"/>
</dbReference>
<dbReference type="InterPro" id="IPR006615">
    <property type="entry name" value="Pept_C19_DUSP"/>
</dbReference>
<dbReference type="InterPro" id="IPR050164">
    <property type="entry name" value="Peptidase_C19"/>
</dbReference>
<dbReference type="InterPro" id="IPR001394">
    <property type="entry name" value="Peptidase_C19_UCH"/>
</dbReference>
<dbReference type="InterPro" id="IPR000626">
    <property type="entry name" value="Ubiquitin-like_dom"/>
</dbReference>
<dbReference type="InterPro" id="IPR029071">
    <property type="entry name" value="Ubiquitin-like_domsf"/>
</dbReference>
<dbReference type="InterPro" id="IPR044743">
    <property type="entry name" value="Ubl_USP48"/>
</dbReference>
<dbReference type="InterPro" id="IPR033841">
    <property type="entry name" value="USP48"/>
</dbReference>
<dbReference type="InterPro" id="IPR018200">
    <property type="entry name" value="USP_CS"/>
</dbReference>
<dbReference type="InterPro" id="IPR028889">
    <property type="entry name" value="USP_dom"/>
</dbReference>
<dbReference type="PANTHER" id="PTHR24006">
    <property type="entry name" value="UBIQUITIN CARBOXYL-TERMINAL HYDROLASE"/>
    <property type="match status" value="1"/>
</dbReference>
<dbReference type="PANTHER" id="PTHR24006:SF722">
    <property type="entry name" value="UBIQUITIN CARBOXYL-TERMINAL HYDROLASE 48"/>
    <property type="match status" value="1"/>
</dbReference>
<dbReference type="Pfam" id="PF06337">
    <property type="entry name" value="DUSP"/>
    <property type="match status" value="1"/>
</dbReference>
<dbReference type="Pfam" id="PF00443">
    <property type="entry name" value="UCH"/>
    <property type="match status" value="1"/>
</dbReference>
<dbReference type="SMART" id="SM00695">
    <property type="entry name" value="DUSP"/>
    <property type="match status" value="1"/>
</dbReference>
<dbReference type="SUPFAM" id="SSF54001">
    <property type="entry name" value="Cysteine proteinases"/>
    <property type="match status" value="1"/>
</dbReference>
<dbReference type="SUPFAM" id="SSF143791">
    <property type="entry name" value="DUSP-like"/>
    <property type="match status" value="2"/>
</dbReference>
<dbReference type="SUPFAM" id="SSF54236">
    <property type="entry name" value="Ubiquitin-like"/>
    <property type="match status" value="1"/>
</dbReference>
<dbReference type="PROSITE" id="PS51283">
    <property type="entry name" value="DUSP"/>
    <property type="match status" value="3"/>
</dbReference>
<dbReference type="PROSITE" id="PS50053">
    <property type="entry name" value="UBIQUITIN_2"/>
    <property type="match status" value="1"/>
</dbReference>
<dbReference type="PROSITE" id="PS00972">
    <property type="entry name" value="USP_1"/>
    <property type="match status" value="1"/>
</dbReference>
<dbReference type="PROSITE" id="PS00973">
    <property type="entry name" value="USP_2"/>
    <property type="match status" value="1"/>
</dbReference>
<dbReference type="PROSITE" id="PS50235">
    <property type="entry name" value="USP_3"/>
    <property type="match status" value="1"/>
</dbReference>
<protein>
    <recommendedName>
        <fullName>Ubiquitin carboxyl-terminal hydrolase 26</fullName>
        <ecNumber>3.4.19.12</ecNumber>
    </recommendedName>
    <alternativeName>
        <fullName>Deubiquitinating enzyme 26</fullName>
        <shortName>AtUBP26</shortName>
    </alternativeName>
    <alternativeName>
        <fullName>Ubiquitin thioesterase 26</fullName>
    </alternativeName>
    <alternativeName>
        <fullName>Ubiquitin-specific-processing protease 26</fullName>
    </alternativeName>
</protein>
<evidence type="ECO:0000255" key="1">
    <source>
        <dbReference type="PROSITE-ProRule" id="PRU00214"/>
    </source>
</evidence>
<evidence type="ECO:0000255" key="2">
    <source>
        <dbReference type="PROSITE-ProRule" id="PRU00613"/>
    </source>
</evidence>
<evidence type="ECO:0000255" key="3">
    <source>
        <dbReference type="PROSITE-ProRule" id="PRU10092"/>
    </source>
</evidence>
<evidence type="ECO:0000255" key="4">
    <source>
        <dbReference type="PROSITE-ProRule" id="PRU10093"/>
    </source>
</evidence>
<evidence type="ECO:0000256" key="5">
    <source>
        <dbReference type="SAM" id="MobiDB-lite"/>
    </source>
</evidence>
<evidence type="ECO:0000269" key="6">
    <source>
    </source>
</evidence>
<evidence type="ECO:0000305" key="7"/>
<reference key="1">
    <citation type="journal article" date="2000" name="Plant Physiol.">
        <title>The ubiquitin-specific protease family from Arabidopsis. AtUBP1 and 2 are required for the resistance to the amino acid analog canavanine.</title>
        <authorList>
            <person name="Yan N."/>
            <person name="Doelling J.H."/>
            <person name="Falbel T.G."/>
            <person name="Durski A.M."/>
            <person name="Vierstra R.D."/>
        </authorList>
    </citation>
    <scope>NUCLEOTIDE SEQUENCE [MRNA]</scope>
    <scope>GENE FAMILY ORGANIZATION</scope>
    <scope>NOMENCLATURE</scope>
</reference>
<reference key="2">
    <citation type="journal article" date="2007" name="Nature">
        <title>Control of DNA methylation and heterochromatic silencing by histone H2B deubiquitination.</title>
        <authorList>
            <person name="Sridhar V.V."/>
            <person name="Kapoor A."/>
            <person name="Zhang K."/>
            <person name="Zhu J."/>
            <person name="Zhou T."/>
            <person name="Hasegawa P.M."/>
            <person name="Bressan R.A."/>
            <person name="Zhu J.-K."/>
        </authorList>
    </citation>
    <scope>NUCLEOTIDE SEQUENCE [MRNA]</scope>
    <scope>FUNCTION</scope>
    <scope>MUTAGENESIS OF CYS-115</scope>
    <scope>SUBCELLULAR LOCATION</scope>
    <scope>TISSUE SPECIFICITY</scope>
</reference>
<reference key="3">
    <citation type="journal article" date="2000" name="Nature">
        <title>Sequence and analysis of chromosome 3 of the plant Arabidopsis thaliana.</title>
        <authorList>
            <person name="Salanoubat M."/>
            <person name="Lemcke K."/>
            <person name="Rieger M."/>
            <person name="Ansorge W."/>
            <person name="Unseld M."/>
            <person name="Fartmann B."/>
            <person name="Valle G."/>
            <person name="Bloecker H."/>
            <person name="Perez-Alonso M."/>
            <person name="Obermaier B."/>
            <person name="Delseny M."/>
            <person name="Boutry M."/>
            <person name="Grivell L.A."/>
            <person name="Mache R."/>
            <person name="Puigdomenech P."/>
            <person name="De Simone V."/>
            <person name="Choisne N."/>
            <person name="Artiguenave F."/>
            <person name="Robert C."/>
            <person name="Brottier P."/>
            <person name="Wincker P."/>
            <person name="Cattolico L."/>
            <person name="Weissenbach J."/>
            <person name="Saurin W."/>
            <person name="Quetier F."/>
            <person name="Schaefer M."/>
            <person name="Mueller-Auer S."/>
            <person name="Gabel C."/>
            <person name="Fuchs M."/>
            <person name="Benes V."/>
            <person name="Wurmbach E."/>
            <person name="Drzonek H."/>
            <person name="Erfle H."/>
            <person name="Jordan N."/>
            <person name="Bangert S."/>
            <person name="Wiedelmann R."/>
            <person name="Kranz H."/>
            <person name="Voss H."/>
            <person name="Holland R."/>
            <person name="Brandt P."/>
            <person name="Nyakatura G."/>
            <person name="Vezzi A."/>
            <person name="D'Angelo M."/>
            <person name="Pallavicini A."/>
            <person name="Toppo S."/>
            <person name="Simionati B."/>
            <person name="Conrad A."/>
            <person name="Hornischer K."/>
            <person name="Kauer G."/>
            <person name="Loehnert T.-H."/>
            <person name="Nordsiek G."/>
            <person name="Reichelt J."/>
            <person name="Scharfe M."/>
            <person name="Schoen O."/>
            <person name="Bargues M."/>
            <person name="Terol J."/>
            <person name="Climent J."/>
            <person name="Navarro P."/>
            <person name="Collado C."/>
            <person name="Perez-Perez A."/>
            <person name="Ottenwaelder B."/>
            <person name="Duchemin D."/>
            <person name="Cooke R."/>
            <person name="Laudie M."/>
            <person name="Berger-Llauro C."/>
            <person name="Purnelle B."/>
            <person name="Masuy D."/>
            <person name="de Haan M."/>
            <person name="Maarse A.C."/>
            <person name="Alcaraz J.-P."/>
            <person name="Cottet A."/>
            <person name="Casacuberta E."/>
            <person name="Monfort A."/>
            <person name="Argiriou A."/>
            <person name="Flores M."/>
            <person name="Liguori R."/>
            <person name="Vitale D."/>
            <person name="Mannhaupt G."/>
            <person name="Haase D."/>
            <person name="Schoof H."/>
            <person name="Rudd S."/>
            <person name="Zaccaria P."/>
            <person name="Mewes H.-W."/>
            <person name="Mayer K.F.X."/>
            <person name="Kaul S."/>
            <person name="Town C.D."/>
            <person name="Koo H.L."/>
            <person name="Tallon L.J."/>
            <person name="Jenkins J."/>
            <person name="Rooney T."/>
            <person name="Rizzo M."/>
            <person name="Walts A."/>
            <person name="Utterback T."/>
            <person name="Fujii C.Y."/>
            <person name="Shea T.P."/>
            <person name="Creasy T.H."/>
            <person name="Haas B."/>
            <person name="Maiti R."/>
            <person name="Wu D."/>
            <person name="Peterson J."/>
            <person name="Van Aken S."/>
            <person name="Pai G."/>
            <person name="Militscher J."/>
            <person name="Sellers P."/>
            <person name="Gill J.E."/>
            <person name="Feldblyum T.V."/>
            <person name="Preuss D."/>
            <person name="Lin X."/>
            <person name="Nierman W.C."/>
            <person name="Salzberg S.L."/>
            <person name="White O."/>
            <person name="Venter J.C."/>
            <person name="Fraser C.M."/>
            <person name="Kaneko T."/>
            <person name="Nakamura Y."/>
            <person name="Sato S."/>
            <person name="Kato T."/>
            <person name="Asamizu E."/>
            <person name="Sasamoto S."/>
            <person name="Kimura T."/>
            <person name="Idesawa K."/>
            <person name="Kawashima K."/>
            <person name="Kishida Y."/>
            <person name="Kiyokawa C."/>
            <person name="Kohara M."/>
            <person name="Matsumoto M."/>
            <person name="Matsuno A."/>
            <person name="Muraki A."/>
            <person name="Nakayama S."/>
            <person name="Nakazaki N."/>
            <person name="Shinpo S."/>
            <person name="Takeuchi C."/>
            <person name="Wada T."/>
            <person name="Watanabe A."/>
            <person name="Yamada M."/>
            <person name="Yasuda M."/>
            <person name="Tabata S."/>
        </authorList>
    </citation>
    <scope>NUCLEOTIDE SEQUENCE [LARGE SCALE GENOMIC DNA]</scope>
    <source>
        <strain>cv. Columbia</strain>
    </source>
</reference>
<reference key="4">
    <citation type="journal article" date="2017" name="Plant J.">
        <title>Araport11: a complete reannotation of the Arabidopsis thaliana reference genome.</title>
        <authorList>
            <person name="Cheng C.Y."/>
            <person name="Krishnakumar V."/>
            <person name="Chan A.P."/>
            <person name="Thibaud-Nissen F."/>
            <person name="Schobel S."/>
            <person name="Town C.D."/>
        </authorList>
    </citation>
    <scope>GENOME REANNOTATION</scope>
    <source>
        <strain>cv. Columbia</strain>
    </source>
</reference>
<accession>Q9SCJ9</accession>
<accession>Q9FPS1</accession>
<sequence length="1067" mass="119934">MSRPNTRNKNKRQRPDAVDSSSQILRKIHEANDVTDDDINQLFMIWKPVCQGCRVNTRDNPNCFCGLVPPLNGSRKSGLWQKTSEIIQSLGPDPTLDRRDSESTPAGLTNLGATCYANSILQCLYMNTAFREGVFSVEVHVLKQNPVLDQIARLFAQLHASQKSFVDSDAFVKTLELDNGVQQDTHEFLTLLLSLLERCLLHSGVKAKTIVQDLFSGSVSHVTTCSKCGRDSEASSKMEDFYALELNVKGLKSLDASLNDYLSLEQLNGDNQYFCGSCNARVDATRCIKLRTLPPVITFQLKRCIFLPKTTAKKKITSSFSFPQVLDMGSRLAESSQNKLTYDLSAVLIHKGSAVNSGHYVAHIKDEKTGLWWEFDDEHVSELGKRPCNEASSSTPQSESNGTASSGNITDGIQSGSSDCRSAIKSEVFSSSDAYMLMYSLRCDKQENQEGQKENPIDITKGEVKQLKGGYLPKHLSEWINNMNAVFLESCKQYNLRKEKELNALTERRQEVRTILSEAAVQSLEEQYFWISTDWLRLWADTTLPPALDNTPLLCSHGKVHASKVNCMKRISELAWIKLESKFNGGPKLGKGDYCRDCLMDGARMVVSSDSYRDRRTFMKSIANDVLSGKCEDGMYYISRAWLQQWIKRKNLDAPTEADAGPTNAITCNHGELMPEQAPGAKRVVVPENFWSFLFEDALKVMSEDTLDCTCFPVDSSQCCHCTEVLSEVACFEDSLRTLKVKQRQNHEKLATGKGIPLTPQSRYFLLPSPWLVQWRIYINMTGKNSSSAPEPERLDGVINTLKCKKHTRLLERLPELVCRRGSYFQKNPSTDKLTIIPELDWKYFCDEWGGLMENGISAFIEVGNTDQSSSPDVIDLEKDSSPDDNMDVDAQQLILRASPEICEECIGERESCELMQKLSYSEGDVFVCFVRGKEAPKAMLEASDSSFEVDRRTSKRSRRTNYGNLTSLKVSATTTVYQLKMMIWELLGVMKENQELHKGSKVIDQESATLADMNIFPGDRLWVRDTEMHEHRDIADELCEKKPGAQDIEEGFRGTLLTGNISSEAC</sequence>
<organism>
    <name type="scientific">Arabidopsis thaliana</name>
    <name type="common">Mouse-ear cress</name>
    <dbReference type="NCBI Taxonomy" id="3702"/>
    <lineage>
        <taxon>Eukaryota</taxon>
        <taxon>Viridiplantae</taxon>
        <taxon>Streptophyta</taxon>
        <taxon>Embryophyta</taxon>
        <taxon>Tracheophyta</taxon>
        <taxon>Spermatophyta</taxon>
        <taxon>Magnoliopsida</taxon>
        <taxon>eudicotyledons</taxon>
        <taxon>Gunneridae</taxon>
        <taxon>Pentapetalae</taxon>
        <taxon>rosids</taxon>
        <taxon>malvids</taxon>
        <taxon>Brassicales</taxon>
        <taxon>Brassicaceae</taxon>
        <taxon>Camelineae</taxon>
        <taxon>Arabidopsis</taxon>
    </lineage>
</organism>
<comment type="function">
    <text evidence="6">Recognizes and hydrolyzes the peptide bond at the C-terminal Gly of ubiquitin. Involved in the processing of poly-ubiquitin precursors as well as that of ubiquitinated proteins. Deubiquitinates H2BK143ub1 of histone H2B.</text>
</comment>
<comment type="catalytic activity">
    <reaction>
        <text>Thiol-dependent hydrolysis of ester, thioester, amide, peptide and isopeptide bonds formed by the C-terminal Gly of ubiquitin (a 76-residue protein attached to proteins as an intracellular targeting signal).</text>
        <dbReference type="EC" id="3.4.19.12"/>
    </reaction>
</comment>
<comment type="subcellular location">
    <subcellularLocation>
        <location evidence="6">Nucleus</location>
    </subcellularLocation>
</comment>
<comment type="tissue specificity">
    <text evidence="6">Expressed in seedlings, roots, stems, leaves and inflorescences.</text>
</comment>
<comment type="similarity">
    <text evidence="7">Belongs to the peptidase C19 family.</text>
</comment>
<comment type="sequence caution" evidence="7">
    <conflict type="erroneous gene model prediction">
        <sequence resource="EMBL-CDS" id="CAB62464"/>
    </conflict>
</comment>
<feature type="chain" id="PRO_0000293492" description="Ubiquitin carboxyl-terminal hydrolase 26">
    <location>
        <begin position="1"/>
        <end position="1067"/>
    </location>
</feature>
<feature type="domain" description="USP">
    <location>
        <begin position="106"/>
        <end position="442"/>
    </location>
</feature>
<feature type="domain" description="DUSP 1" evidence="2">
    <location>
        <begin position="503"/>
        <end position="595"/>
    </location>
</feature>
<feature type="domain" description="DUSP 2" evidence="2">
    <location>
        <begin position="610"/>
        <end position="711"/>
    </location>
</feature>
<feature type="domain" description="DUSP 3" evidence="2">
    <location>
        <begin position="738"/>
        <end position="861"/>
    </location>
</feature>
<feature type="domain" description="Ubiquitin-like" evidence="1">
    <location>
        <begin position="948"/>
        <end position="1031"/>
    </location>
</feature>
<feature type="region of interest" description="Disordered" evidence="5">
    <location>
        <begin position="1"/>
        <end position="22"/>
    </location>
</feature>
<feature type="region of interest" description="Disordered" evidence="5">
    <location>
        <begin position="385"/>
        <end position="418"/>
    </location>
</feature>
<feature type="compositionally biased region" description="Basic residues" evidence="5">
    <location>
        <begin position="1"/>
        <end position="12"/>
    </location>
</feature>
<feature type="compositionally biased region" description="Polar residues" evidence="5">
    <location>
        <begin position="390"/>
        <end position="418"/>
    </location>
</feature>
<feature type="active site" description="Nucleophile">
    <location>
        <position position="115"/>
    </location>
</feature>
<feature type="active site" description="Proton acceptor" evidence="3 4">
    <location>
        <position position="359"/>
    </location>
</feature>
<feature type="mutagenesis site" description="Loss of activity." evidence="6">
    <original>C</original>
    <variation>S</variation>
    <location>
        <position position="115"/>
    </location>
</feature>
<feature type="sequence conflict" description="In Ref. 1; AAG42764." evidence="7" ref="1">
    <original>E</original>
    <variation>G</variation>
    <location>
        <position position="935"/>
    </location>
</feature>
<feature type="sequence conflict" description="In Ref. 1; AAG42764." evidence="7" ref="1">
    <original>G</original>
    <variation>E</variation>
    <location>
        <position position="989"/>
    </location>
</feature>
<gene>
    <name type="primary">UBP26</name>
    <name type="synonym">SUP32</name>
    <name type="ordered locus">At3g49600</name>
    <name type="ORF">T9C5.190</name>
</gene>